<feature type="chain" id="PRO_0000451899" description="Bifunctional pinoresinol-lariciresinol reductase">
    <location>
        <begin position="1"/>
        <end position="311"/>
    </location>
</feature>
<feature type="active site" description="Proton acceptor" evidence="1">
    <location>
        <position position="138"/>
    </location>
</feature>
<feature type="binding site" evidence="1">
    <location>
        <begin position="10"/>
        <end position="16"/>
    </location>
    <ligand>
        <name>NADP(+)</name>
        <dbReference type="ChEBI" id="CHEBI:58349"/>
    </ligand>
</feature>
<feature type="binding site" evidence="1">
    <location>
        <position position="35"/>
    </location>
    <ligand>
        <name>NADP(+)</name>
        <dbReference type="ChEBI" id="CHEBI:58349"/>
    </ligand>
</feature>
<feature type="binding site" evidence="1">
    <location>
        <position position="44"/>
    </location>
    <ligand>
        <name>NADP(+)</name>
        <dbReference type="ChEBI" id="CHEBI:58349"/>
    </ligand>
</feature>
<feature type="binding site" evidence="1">
    <location>
        <position position="142"/>
    </location>
    <ligand>
        <name>NADP(+)</name>
        <dbReference type="ChEBI" id="CHEBI:58349"/>
    </ligand>
</feature>
<feature type="binding site" evidence="1">
    <location>
        <position position="270"/>
    </location>
    <ligand>
        <name>substrate</name>
    </ligand>
</feature>
<feature type="sequence conflict" description="In Ref. 1; ACF71492." evidence="6" ref="1">
    <original>L</original>
    <variation>F</variation>
    <location>
        <position position="24"/>
    </location>
</feature>
<feature type="sequence conflict" description="In Ref. 1; ACF71492." evidence="6" ref="1">
    <original>V</original>
    <variation>I</variation>
    <location>
        <position position="38"/>
    </location>
</feature>
<feature type="sequence conflict" description="In Ref. 1; ACF71492." evidence="6" ref="1">
    <original>E</original>
    <variation>K</variation>
    <location>
        <position position="104"/>
    </location>
</feature>
<evidence type="ECO:0000250" key="1">
    <source>
        <dbReference type="UniProtKB" id="Q9LD14"/>
    </source>
</evidence>
<evidence type="ECO:0000269" key="2">
    <source>
    </source>
</evidence>
<evidence type="ECO:0000269" key="3">
    <source>
    </source>
</evidence>
<evidence type="ECO:0000303" key="4">
    <source>
    </source>
</evidence>
<evidence type="ECO:0000303" key="5">
    <source ref="2"/>
</evidence>
<evidence type="ECO:0000305" key="6"/>
<evidence type="ECO:0000305" key="7">
    <source>
    </source>
</evidence>
<gene>
    <name evidence="4" type="primary">PLR</name>
</gene>
<proteinExistence type="evidence at protein level"/>
<organism>
    <name type="scientific">Sinopodophyllum hexandrum</name>
    <name type="common">Himalayan may apple</name>
    <name type="synonym">Podophyllum hexandrum</name>
    <dbReference type="NCBI Taxonomy" id="93608"/>
    <lineage>
        <taxon>Eukaryota</taxon>
        <taxon>Viridiplantae</taxon>
        <taxon>Streptophyta</taxon>
        <taxon>Embryophyta</taxon>
        <taxon>Tracheophyta</taxon>
        <taxon>Spermatophyta</taxon>
        <taxon>Magnoliopsida</taxon>
        <taxon>Ranunculales</taxon>
        <taxon>Berberidaceae</taxon>
        <taxon>Podophylloideae</taxon>
        <taxon>Podophylleae</taxon>
        <taxon>Sinopodophyllum</taxon>
    </lineage>
</organism>
<protein>
    <recommendedName>
        <fullName evidence="4 5">Bifunctional pinoresinol-lariciresinol reductase</fullName>
        <shortName evidence="4">PhPLR</shortName>
    </recommendedName>
    <alternativeName>
        <fullName evidence="6">(+)-lariciresinol reductase</fullName>
        <ecNumber evidence="3">1.23.1.2</ecNumber>
    </alternativeName>
    <alternativeName>
        <fullName evidence="6">(+)-pinoresinol reductase</fullName>
        <ecNumber evidence="3">1.23.1.1</ecNumber>
    </alternativeName>
</protein>
<dbReference type="EC" id="1.23.1.2" evidence="3"/>
<dbReference type="EC" id="1.23.1.1" evidence="3"/>
<dbReference type="EMBL" id="EU855792">
    <property type="protein sequence ID" value="ACF71492.1"/>
    <property type="molecule type" value="mRNA"/>
</dbReference>
<dbReference type="EMBL" id="EU240218">
    <property type="protein sequence ID" value="ABY75535.2"/>
    <property type="molecule type" value="mRNA"/>
</dbReference>
<dbReference type="SMR" id="B0LL23"/>
<dbReference type="KEGG" id="ag:ABY75535"/>
<dbReference type="UniPathway" id="UPA00711"/>
<dbReference type="GO" id="GO:0010284">
    <property type="term" value="F:lariciresinol reductase activity"/>
    <property type="evidence" value="ECO:0000314"/>
    <property type="project" value="UniProtKB"/>
</dbReference>
<dbReference type="GO" id="GO:0010283">
    <property type="term" value="F:pinoresinol reductase activity"/>
    <property type="evidence" value="ECO:0000314"/>
    <property type="project" value="UniProtKB"/>
</dbReference>
<dbReference type="GO" id="GO:1902125">
    <property type="term" value="P:(+)-pinoresinol catabolic process"/>
    <property type="evidence" value="ECO:0000314"/>
    <property type="project" value="UniProtKB"/>
</dbReference>
<dbReference type="GO" id="GO:1902138">
    <property type="term" value="P:(-)-secoisolariciresinol biosynthetic process"/>
    <property type="evidence" value="ECO:0000314"/>
    <property type="project" value="UniProtKB"/>
</dbReference>
<dbReference type="GO" id="GO:0009699">
    <property type="term" value="P:phenylpropanoid biosynthetic process"/>
    <property type="evidence" value="ECO:0000314"/>
    <property type="project" value="UniProtKB"/>
</dbReference>
<dbReference type="GO" id="GO:0009753">
    <property type="term" value="P:response to jasmonic acid"/>
    <property type="evidence" value="ECO:0000270"/>
    <property type="project" value="UniProtKB"/>
</dbReference>
<dbReference type="GO" id="GO:0009411">
    <property type="term" value="P:response to UV"/>
    <property type="evidence" value="ECO:0000270"/>
    <property type="project" value="UniProtKB"/>
</dbReference>
<dbReference type="GO" id="GO:0009611">
    <property type="term" value="P:response to wounding"/>
    <property type="evidence" value="ECO:0000270"/>
    <property type="project" value="UniProtKB"/>
</dbReference>
<dbReference type="CDD" id="cd05259">
    <property type="entry name" value="PCBER_SDR_a"/>
    <property type="match status" value="1"/>
</dbReference>
<dbReference type="Gene3D" id="3.40.50.720">
    <property type="entry name" value="NAD(P)-binding Rossmann-like Domain"/>
    <property type="match status" value="1"/>
</dbReference>
<dbReference type="Gene3D" id="3.90.25.10">
    <property type="entry name" value="UDP-galactose 4-epimerase, domain 1"/>
    <property type="match status" value="1"/>
</dbReference>
<dbReference type="InterPro" id="IPR036291">
    <property type="entry name" value="NAD(P)-bd_dom_sf"/>
</dbReference>
<dbReference type="InterPro" id="IPR008030">
    <property type="entry name" value="NmrA-like"/>
</dbReference>
<dbReference type="InterPro" id="IPR050608">
    <property type="entry name" value="NmrA-type/Isoflavone_red_sf"/>
</dbReference>
<dbReference type="InterPro" id="IPR045312">
    <property type="entry name" value="PCBER-like"/>
</dbReference>
<dbReference type="PANTHER" id="PTHR43349:SF47">
    <property type="entry name" value="NMRA-LIKE DOMAIN-CONTAINING PROTEIN"/>
    <property type="match status" value="1"/>
</dbReference>
<dbReference type="PANTHER" id="PTHR43349">
    <property type="entry name" value="PINORESINOL REDUCTASE-RELATED"/>
    <property type="match status" value="1"/>
</dbReference>
<dbReference type="Pfam" id="PF05368">
    <property type="entry name" value="NmrA"/>
    <property type="match status" value="1"/>
</dbReference>
<dbReference type="SUPFAM" id="SSF51735">
    <property type="entry name" value="NAD(P)-binding Rossmann-fold domains"/>
    <property type="match status" value="1"/>
</dbReference>
<comment type="function">
    <text evidence="3">Reductase involved in lignan biosynthesis (PubMed:26359402). Also involved in the biosynthesis of etoposide, a chemotherapeutic compound of the topoisomerase inhibitor family (PubMed:26359402). Catalyzes the enantioselective sequential conversion of (+)-pinoresinol into (+)-lariciresinol and of (+)-lariciresinol into (-)-secoisolariciresinol (PubMed:26359402). Abstracts the 4R-hydride from the NADPH cofactor during catalysis (PubMed:26359402).</text>
</comment>
<comment type="catalytic activity">
    <reaction evidence="3">
        <text>(-)-secoisolariciresinol + NADP(+) = (+)-lariciresinol + NADPH + H(+)</text>
        <dbReference type="Rhea" id="RHEA:34423"/>
        <dbReference type="ChEBI" id="CHEBI:15378"/>
        <dbReference type="ChEBI" id="CHEBI:57783"/>
        <dbReference type="ChEBI" id="CHEBI:58349"/>
        <dbReference type="ChEBI" id="CHEBI:65004"/>
        <dbReference type="ChEBI" id="CHEBI:67246"/>
        <dbReference type="EC" id="1.23.1.2"/>
    </reaction>
    <physiologicalReaction direction="left-to-right" evidence="3">
        <dbReference type="Rhea" id="RHEA:34424"/>
    </physiologicalReaction>
</comment>
<comment type="catalytic activity">
    <reaction evidence="3">
        <text>(+)-lariciresinol + NADP(+) = (+)-pinoresinol + NADPH + H(+)</text>
        <dbReference type="Rhea" id="RHEA:34419"/>
        <dbReference type="ChEBI" id="CHEBI:40"/>
        <dbReference type="ChEBI" id="CHEBI:15378"/>
        <dbReference type="ChEBI" id="CHEBI:57783"/>
        <dbReference type="ChEBI" id="CHEBI:58349"/>
        <dbReference type="ChEBI" id="CHEBI:67246"/>
        <dbReference type="EC" id="1.23.1.1"/>
    </reaction>
    <physiologicalReaction direction="left-to-right" evidence="3">
        <dbReference type="Rhea" id="RHEA:34420"/>
    </physiologicalReaction>
</comment>
<comment type="pathway">
    <text evidence="3">Aromatic compound metabolism; phenylpropanoid biosynthesis.</text>
</comment>
<comment type="subunit">
    <text evidence="1">Dimer.</text>
</comment>
<comment type="tissue specificity">
    <text evidence="2 3">Expressed in rhizomes, stems, and leaves.</text>
</comment>
<comment type="induction">
    <text evidence="2 3">Transiently induced after wounding and by jasmonic acid (MeJA) (PubMed:23653238, PubMed:26359402). After an exposition to UV-light, first transiently induced before fading out (PubMed:23653238).</text>
</comment>
<comment type="biotechnology">
    <text evidence="7">Combinatorially expression of Sinopodophyllum hexandrum (mayapple) genes of the podophyllotoxin pathway (e.g. DIR, PLR, SDH, CYP719A23, OMT3, CYP71CU1, OMT1, 2-ODD, CYP71BE54 and CYP82D61) in Nicotiana benthamiana (tobacco) results in the production of the chemotherapeutic compound etoposide.</text>
</comment>
<comment type="similarity">
    <text evidence="6">Belongs to the NmrA-type oxidoreductase family. Isoflavone reductase subfamily.</text>
</comment>
<accession>B0LL23</accession>
<accession>B5AKD4</accession>
<reference key="1">
    <citation type="journal article" date="2013" name="Protoplasma">
        <title>Expressed sequence tags and molecular cloning and characterization of gene encoding pinoresinol/lariciresinol reductase from Podophyllum hexandrum.</title>
        <authorList>
            <person name="Wankhede D.P."/>
            <person name="Biswas D.K."/>
            <person name="Rajkumar S."/>
            <person name="Sinha A.K."/>
        </authorList>
    </citation>
    <scope>NUCLEOTIDE SEQUENCE [MRNA]</scope>
    <scope>TISSUE SPECIFICITY</scope>
    <scope>INDUCTION BY WOUNDING; UV-LIGHT AND JASMONIC ACID</scope>
</reference>
<reference key="2">
    <citation type="submission" date="2008-07" db="EMBL/GenBank/DDBJ databases">
        <title>Molecular cloning of genes involved in podophyllotoxin biosynthetic pathway.</title>
        <authorList>
            <person name="Sharma M."/>
            <person name="Pal R.S."/>
            <person name="Kumar S."/>
            <person name="Ahuja P."/>
        </authorList>
    </citation>
    <scope>NUCLEOTIDE SEQUENCE [MRNA]</scope>
</reference>
<reference key="3">
    <citation type="journal article" date="2015" name="Science">
        <title>Six enzymes from mayapple that complete the biosynthetic pathway to the etoposide aglycone.</title>
        <authorList>
            <person name="Lau W."/>
            <person name="Sattely E.S."/>
        </authorList>
    </citation>
    <scope>FUNCTION</scope>
    <scope>CATALYTIC ACTIVITY</scope>
    <scope>BIOTECHNOLOGY</scope>
    <scope>TISSUE SPECIFICITY</scope>
    <scope>INDUCTION BY WOUNDING</scope>
    <scope>PATHWAY</scope>
</reference>
<name>PLR_SINHE</name>
<sequence length="311" mass="34775">MAKSRVLIVGGTGYLGRRMVKACLDQGHTTYVLHRQEVGVDIDKIQMLLSFKEQGAHLVEGSFNDHRSLVEAVKLVDVVICTISGVHIRSHQILLQLKLVEAIEEAGNVKRFLPSEFGMDPARMAHAMEPGRATFDEKMVVRKAIEDAKIPHTYASANCFAGYFLGGLCQFGKIIPSKESVILSGDGNVKGIYVDEYDIATYTIKTMDDPRTLNKTIYIRPPANILSQREVVEIWEKLIGKVLDKSSLSEEDFLALMKGLSHGHQAGLTHYYHVSYEGCLTNFEVEDGVDASKLYPQVNYTTVSEYLKRYL</sequence>
<keyword id="KW-0521">NADP</keyword>
<keyword id="KW-0560">Oxidoreductase</keyword>